<accession>Q3UQU0</accession>
<accession>Q0P669</accession>
<accession>Q5FWH1</accession>
<accession>Q811F7</accession>
<organism>
    <name type="scientific">Mus musculus</name>
    <name type="common">Mouse</name>
    <dbReference type="NCBI Taxonomy" id="10090"/>
    <lineage>
        <taxon>Eukaryota</taxon>
        <taxon>Metazoa</taxon>
        <taxon>Chordata</taxon>
        <taxon>Craniata</taxon>
        <taxon>Vertebrata</taxon>
        <taxon>Euteleostomi</taxon>
        <taxon>Mammalia</taxon>
        <taxon>Eutheria</taxon>
        <taxon>Euarchontoglires</taxon>
        <taxon>Glires</taxon>
        <taxon>Rodentia</taxon>
        <taxon>Myomorpha</taxon>
        <taxon>Muroidea</taxon>
        <taxon>Muridae</taxon>
        <taxon>Murinae</taxon>
        <taxon>Mus</taxon>
        <taxon>Mus</taxon>
    </lineage>
</organism>
<dbReference type="EMBL" id="AK142152">
    <property type="protein sequence ID" value="BAE24949.1"/>
    <property type="molecule type" value="mRNA"/>
</dbReference>
<dbReference type="EMBL" id="BC031484">
    <property type="protein sequence ID" value="AAH31484.1"/>
    <property type="molecule type" value="mRNA"/>
</dbReference>
<dbReference type="EMBL" id="BC046438">
    <property type="protein sequence ID" value="AAH46438.1"/>
    <property type="molecule type" value="mRNA"/>
</dbReference>
<dbReference type="CCDS" id="CCDS88482.1"/>
<dbReference type="RefSeq" id="NP_001019679.2">
    <property type="nucleotide sequence ID" value="NM_001024508.3"/>
</dbReference>
<dbReference type="RefSeq" id="NP_001294970.1">
    <property type="nucleotide sequence ID" value="NM_001308041.2"/>
</dbReference>
<dbReference type="SMR" id="Q3UQU0"/>
<dbReference type="BioGRID" id="222796">
    <property type="interactions" value="5"/>
</dbReference>
<dbReference type="ComplexPortal" id="CPX-4202">
    <property type="entry name" value="GBAF (SWI/SNF) ATP-dependent chromatin remodeling complex, ACTL6A-BICRA-SMARCA2 variant"/>
</dbReference>
<dbReference type="ComplexPortal" id="CPX-4204">
    <property type="entry name" value="GBAF (SWI/SNF) ATP-dependent chromatin remodeling complex, ACTL6A-BICRAL-SMARCA2 variant"/>
</dbReference>
<dbReference type="ComplexPortal" id="CPX-4221">
    <property type="entry name" value="GBAF (SWI/SNF) ATP-dependent chromatin remodeling complex, ACTL6A-BICRA-SMARCA4 variant"/>
</dbReference>
<dbReference type="ComplexPortal" id="CPX-4222">
    <property type="entry name" value="GBAF (SWI/SNF) ATP-dependent chromatin remodeling complex, ACTL6A-BICRAL-SMARCA4 variant"/>
</dbReference>
<dbReference type="ComplexPortal" id="CPX-4227">
    <property type="entry name" value="GBAF (SWI/SNF) ATP-dependent chromatin remodeling complex, ACTL6B-BICRA-SMARCA2 variant"/>
</dbReference>
<dbReference type="ComplexPortal" id="CPX-4228">
    <property type="entry name" value="GBAF (SWI/SNF) ATP-dependent chromatin remodeling complex, ACTL6B-BICRAL-SMARCA2 variant"/>
</dbReference>
<dbReference type="ComplexPortal" id="CPX-4229">
    <property type="entry name" value="GBAF (SWI/SNF) ATP-dependent chromatin remodeling complex, ACTL6B-BICRA-SMARCA4 variant"/>
</dbReference>
<dbReference type="ComplexPortal" id="CPX-4230">
    <property type="entry name" value="GBAF (SWI/SNF) ATP-dependent chromatin remodeling complex, ACTL6B-BICRAL-SMARCA4 variant"/>
</dbReference>
<dbReference type="FunCoup" id="Q3UQU0">
    <property type="interactions" value="3627"/>
</dbReference>
<dbReference type="IntAct" id="Q3UQU0">
    <property type="interactions" value="1"/>
</dbReference>
<dbReference type="STRING" id="10090.ENSMUSP00000096982"/>
<dbReference type="BindingDB" id="Q3UQU0"/>
<dbReference type="ChEMBL" id="CHEMBL3822347"/>
<dbReference type="GlyGen" id="Q3UQU0">
    <property type="glycosylation" value="1 site, 1 N-linked glycan (1 site)"/>
</dbReference>
<dbReference type="iPTMnet" id="Q3UQU0"/>
<dbReference type="PhosphoSitePlus" id="Q3UQU0"/>
<dbReference type="jPOST" id="Q3UQU0"/>
<dbReference type="PaxDb" id="10090-ENSMUSP00000096982"/>
<dbReference type="PeptideAtlas" id="Q3UQU0"/>
<dbReference type="ProteomicsDB" id="273762"/>
<dbReference type="Pumba" id="Q3UQU0"/>
<dbReference type="Antibodypedia" id="8843">
    <property type="antibodies" value="178 antibodies from 26 providers"/>
</dbReference>
<dbReference type="Ensembl" id="ENSMUST00000222399.2">
    <property type="protein sequence ID" value="ENSMUSP00000152390.2"/>
    <property type="gene ID" value="ENSMUSG00000057649.7"/>
</dbReference>
<dbReference type="GeneID" id="105246"/>
<dbReference type="KEGG" id="mmu:105246"/>
<dbReference type="UCSC" id="uc007rej.1">
    <property type="organism name" value="mouse"/>
</dbReference>
<dbReference type="AGR" id="MGI:2145317"/>
<dbReference type="CTD" id="65980"/>
<dbReference type="MGI" id="MGI:2145317">
    <property type="gene designation" value="Brd9"/>
</dbReference>
<dbReference type="VEuPathDB" id="HostDB:ENSMUSG00000057649"/>
<dbReference type="eggNOG" id="KOG1828">
    <property type="taxonomic scope" value="Eukaryota"/>
</dbReference>
<dbReference type="GeneTree" id="ENSGT00950000183170"/>
<dbReference type="InParanoid" id="Q3UQU0"/>
<dbReference type="OrthoDB" id="21648at2759"/>
<dbReference type="PhylomeDB" id="Q3UQU0"/>
<dbReference type="TreeFam" id="TF106439"/>
<dbReference type="BioGRID-ORCS" id="105246">
    <property type="hits" value="19 hits in 82 CRISPR screens"/>
</dbReference>
<dbReference type="ChiTaRS" id="Brd9">
    <property type="organism name" value="mouse"/>
</dbReference>
<dbReference type="PRO" id="PR:Q3UQU0"/>
<dbReference type="Proteomes" id="UP000000589">
    <property type="component" value="Chromosome 13"/>
</dbReference>
<dbReference type="RNAct" id="Q3UQU0">
    <property type="molecule type" value="protein"/>
</dbReference>
<dbReference type="Bgee" id="ENSMUSG00000057649">
    <property type="expression patterns" value="Expressed in floor plate of midbrain and 241 other cell types or tissues"/>
</dbReference>
<dbReference type="ExpressionAtlas" id="Q3UQU0">
    <property type="expression patterns" value="baseline and differential"/>
</dbReference>
<dbReference type="GO" id="GO:0000785">
    <property type="term" value="C:chromatin"/>
    <property type="evidence" value="ECO:0000303"/>
    <property type="project" value="ComplexPortal"/>
</dbReference>
<dbReference type="GO" id="GO:0140288">
    <property type="term" value="C:GBAF complex"/>
    <property type="evidence" value="ECO:0000303"/>
    <property type="project" value="ComplexPortal"/>
</dbReference>
<dbReference type="GO" id="GO:0016514">
    <property type="term" value="C:SWI/SNF complex"/>
    <property type="evidence" value="ECO:0000314"/>
    <property type="project" value="UniProtKB"/>
</dbReference>
<dbReference type="GO" id="GO:0070577">
    <property type="term" value="F:lysine-acetylated histone binding"/>
    <property type="evidence" value="ECO:0000250"/>
    <property type="project" value="UniProtKB"/>
</dbReference>
<dbReference type="GO" id="GO:0006338">
    <property type="term" value="P:chromatin remodeling"/>
    <property type="evidence" value="ECO:0000303"/>
    <property type="project" value="ComplexPortal"/>
</dbReference>
<dbReference type="GO" id="GO:0045596">
    <property type="term" value="P:negative regulation of cell differentiation"/>
    <property type="evidence" value="ECO:0000303"/>
    <property type="project" value="ComplexPortal"/>
</dbReference>
<dbReference type="GO" id="GO:0008284">
    <property type="term" value="P:positive regulation of cell population proliferation"/>
    <property type="evidence" value="ECO:0000303"/>
    <property type="project" value="ComplexPortal"/>
</dbReference>
<dbReference type="GO" id="GO:1902459">
    <property type="term" value="P:positive regulation of stem cell population maintenance"/>
    <property type="evidence" value="ECO:0000303"/>
    <property type="project" value="ComplexPortal"/>
</dbReference>
<dbReference type="GO" id="GO:0006357">
    <property type="term" value="P:regulation of transcription by RNA polymerase II"/>
    <property type="evidence" value="ECO:0000303"/>
    <property type="project" value="ComplexPortal"/>
</dbReference>
<dbReference type="CDD" id="cd05513">
    <property type="entry name" value="Bromo_brd7_like"/>
    <property type="match status" value="1"/>
</dbReference>
<dbReference type="FunFam" id="1.20.920.10:FF:000022">
    <property type="entry name" value="Putative bromodomain-containing protein 9"/>
    <property type="match status" value="1"/>
</dbReference>
<dbReference type="Gene3D" id="1.20.920.10">
    <property type="entry name" value="Bromodomain-like"/>
    <property type="match status" value="1"/>
</dbReference>
<dbReference type="InterPro" id="IPR001487">
    <property type="entry name" value="Bromodomain"/>
</dbReference>
<dbReference type="InterPro" id="IPR036427">
    <property type="entry name" value="Bromodomain-like_sf"/>
</dbReference>
<dbReference type="InterPro" id="IPR051831">
    <property type="entry name" value="Bromodomain_contain_prot"/>
</dbReference>
<dbReference type="InterPro" id="IPR021900">
    <property type="entry name" value="DUF3512"/>
</dbReference>
<dbReference type="PANTHER" id="PTHR22881">
    <property type="entry name" value="BROMODOMAIN CONTAINING PROTEIN"/>
    <property type="match status" value="1"/>
</dbReference>
<dbReference type="PANTHER" id="PTHR22881:SF4">
    <property type="entry name" value="BROMODOMAIN-CONTAINING PROTEIN 9"/>
    <property type="match status" value="1"/>
</dbReference>
<dbReference type="Pfam" id="PF00439">
    <property type="entry name" value="Bromodomain"/>
    <property type="match status" value="1"/>
</dbReference>
<dbReference type="Pfam" id="PF12024">
    <property type="entry name" value="DUF3512"/>
    <property type="match status" value="1"/>
</dbReference>
<dbReference type="PRINTS" id="PR00503">
    <property type="entry name" value="BROMODOMAIN"/>
</dbReference>
<dbReference type="SMART" id="SM00297">
    <property type="entry name" value="BROMO"/>
    <property type="match status" value="1"/>
</dbReference>
<dbReference type="SUPFAM" id="SSF47370">
    <property type="entry name" value="Bromodomain"/>
    <property type="match status" value="1"/>
</dbReference>
<dbReference type="PROSITE" id="PS50014">
    <property type="entry name" value="BROMODOMAIN_2"/>
    <property type="match status" value="1"/>
</dbReference>
<gene>
    <name type="primary">Brd9</name>
</gene>
<comment type="function">
    <text evidence="1">Plays a role in chromatin remodeling and regulation of transcription. Acts as a chromatin reader that recognizes and binds acylated histones: binds histones that are acetylated and/or butyrylated. Component of SWI/SNF chromatin remodeling subcomplex GBAF that carries out key enzymatic activities, changing chromatin structure by altering DNA-histone contacts within a nucleosome in an ATP-dependent manner. Also orchestrates the RAD51-RAD54 complex formation and thereby plays a role in homologous recombination (HR).</text>
</comment>
<comment type="subunit">
    <text evidence="1 4">Binds acetylated histones H3 and H4. Binds butyrylated histone H4 (By similarity). Component of the multiprotein chromatin-remodeling subcomplex SWI/SNF called GBAF, which includes at least BICRA or BICRAL (mutually exclusive), BRD9, SS18, the core BAF subunits, SMARCA2/BRM, SMARCA4/BRG1/BAF190A, ACTL6A/BAF53, SMARCC1/BAF155, and SMARCD1/BAF60A (PubMed:29374058). Interacts (via N-terminal bromodomain) with acetylated RAD54. Interacts (via C-terminus) with RAD51 (By similarity).</text>
</comment>
<comment type="subcellular location">
    <subcellularLocation>
        <location evidence="1">Nucleus</location>
    </subcellularLocation>
</comment>
<comment type="domain">
    <text evidence="1">The Bromo domain mediates interaction with histones that have acetylated lysine residues at specific positions. Also recognizes and binds histones that are butyrylated.</text>
</comment>
<keyword id="KW-0007">Acetylation</keyword>
<keyword id="KW-0103">Bromodomain</keyword>
<keyword id="KW-0156">Chromatin regulator</keyword>
<keyword id="KW-1017">Isopeptide bond</keyword>
<keyword id="KW-0539">Nucleus</keyword>
<keyword id="KW-0597">Phosphoprotein</keyword>
<keyword id="KW-1185">Reference proteome</keyword>
<keyword id="KW-0804">Transcription</keyword>
<keyword id="KW-0805">Transcription regulation</keyword>
<keyword id="KW-0832">Ubl conjugation</keyword>
<feature type="chain" id="PRO_0000239220" description="Bromodomain-containing protein 9">
    <location>
        <begin position="1"/>
        <end position="596"/>
    </location>
</feature>
<feature type="domain" description="Bromo" evidence="2">
    <location>
        <begin position="136"/>
        <end position="240"/>
    </location>
</feature>
<feature type="region of interest" description="Disordered" evidence="3">
    <location>
        <begin position="1"/>
        <end position="26"/>
    </location>
</feature>
<feature type="region of interest" description="Disordered" evidence="3">
    <location>
        <begin position="38"/>
        <end position="137"/>
    </location>
</feature>
<feature type="region of interest" description="Histone H4K5ac H4K8ac and histone H4K5bu H4K8bu binding" evidence="1">
    <location>
        <begin position="214"/>
        <end position="216"/>
    </location>
</feature>
<feature type="region of interest" description="Disordered" evidence="3">
    <location>
        <begin position="536"/>
        <end position="596"/>
    </location>
</feature>
<feature type="compositionally biased region" description="Basic residues" evidence="3">
    <location>
        <begin position="1"/>
        <end position="10"/>
    </location>
</feature>
<feature type="compositionally biased region" description="Basic and acidic residues" evidence="3">
    <location>
        <begin position="50"/>
        <end position="62"/>
    </location>
</feature>
<feature type="compositionally biased region" description="Basic residues" evidence="3">
    <location>
        <begin position="63"/>
        <end position="73"/>
    </location>
</feature>
<feature type="compositionally biased region" description="Basic and acidic residues" evidence="3">
    <location>
        <begin position="74"/>
        <end position="85"/>
    </location>
</feature>
<feature type="compositionally biased region" description="Basic residues" evidence="3">
    <location>
        <begin position="86"/>
        <end position="97"/>
    </location>
</feature>
<feature type="compositionally biased region" description="Basic and acidic residues" evidence="3">
    <location>
        <begin position="111"/>
        <end position="126"/>
    </location>
</feature>
<feature type="compositionally biased region" description="Low complexity" evidence="3">
    <location>
        <begin position="543"/>
        <end position="555"/>
    </location>
</feature>
<feature type="site" description="Histone H4K5ac H4K8ac and histone H4K5bu H4K8bu binding" evidence="1">
    <location>
        <position position="169"/>
    </location>
</feature>
<feature type="site" description="Histone H4K5ac H4K8ac and histone H4K5bu H4K8bu binding" evidence="1">
    <location>
        <position position="222"/>
    </location>
</feature>
<feature type="modified residue" description="Phosphoserine" evidence="6">
    <location>
        <position position="56"/>
    </location>
</feature>
<feature type="modified residue" description="N6-acetyllysine; alternate" evidence="1">
    <location>
        <position position="372"/>
    </location>
</feature>
<feature type="modified residue" description="Phosphoserine" evidence="1">
    <location>
        <position position="565"/>
    </location>
</feature>
<feature type="modified residue" description="Phosphoserine" evidence="1">
    <location>
        <position position="587"/>
    </location>
</feature>
<feature type="cross-link" description="Glycyl lysine isopeptide (Lys-Gly) (interchain with G-Cter in SUMO2); alternate" evidence="1">
    <location>
        <position position="372"/>
    </location>
</feature>
<feature type="sequence conflict" description="In Ref. 2; AAH31484." evidence="5" ref="2">
    <original>K</original>
    <variation>KQ</variation>
    <location>
        <position position="239"/>
    </location>
</feature>
<sequence length="596" mass="66840">MGKKHKKHKAEWRSSYEDYTDTPLEKPLKLVLKVGGSEVTELSGSGHDSSYYDDRSDHERERHREKKKKKKKKSEKEKHLDEEERRKRKEEKKRKREKEHCDSEGEADAFDPGKKVEVEPPPDRPVRACRTQPAENESTPIQRLLEHFLRQLQRKDPHGFFAFPVTDAIAPGYSMIIKHPMDFGTMKDKIVANEYKSVTEFKADFKLMCDNAMTYNRPDTVYYKLAKKILHAGFKMMSKAALLGSEDPAAEEPVPEVVPVQVETTKKSKKPSREVISCMFEPEGNACSLTDSTAEEHVLALVEHAADEARDRINRFLPGGKMGYLKKLGDGSLLYSVVNAPEPDADEEETHPVDLSSLSSKLLPGFTTLGFKDERRNKVTFLSSASTALSMQNNSVFGDLKSDEMELLYSAYGDETGVQCALSLQEFVKDAGSYSKKMVDDLLDQITGGDHSRMIFQLKQRRSIPMRPADEMKVGDPLGESGGPVLDFMSMKQYPDVSLDVSMLSSLGKVKKELDHEDSHLNLDETARLLQDLHEAQAERGGSRPSSNLSSLSTASEREHPPPGSPSRLSVGEQPDVAHDPYEFLQSPEPAAPAKN</sequence>
<evidence type="ECO:0000250" key="1">
    <source>
        <dbReference type="UniProtKB" id="Q9H8M2"/>
    </source>
</evidence>
<evidence type="ECO:0000255" key="2">
    <source>
        <dbReference type="PROSITE-ProRule" id="PRU00035"/>
    </source>
</evidence>
<evidence type="ECO:0000256" key="3">
    <source>
        <dbReference type="SAM" id="MobiDB-lite"/>
    </source>
</evidence>
<evidence type="ECO:0000269" key="4">
    <source>
    </source>
</evidence>
<evidence type="ECO:0000305" key="5"/>
<evidence type="ECO:0007744" key="6">
    <source>
    </source>
</evidence>
<reference key="1">
    <citation type="journal article" date="2005" name="Science">
        <title>The transcriptional landscape of the mammalian genome.</title>
        <authorList>
            <person name="Carninci P."/>
            <person name="Kasukawa T."/>
            <person name="Katayama S."/>
            <person name="Gough J."/>
            <person name="Frith M.C."/>
            <person name="Maeda N."/>
            <person name="Oyama R."/>
            <person name="Ravasi T."/>
            <person name="Lenhard B."/>
            <person name="Wells C."/>
            <person name="Kodzius R."/>
            <person name="Shimokawa K."/>
            <person name="Bajic V.B."/>
            <person name="Brenner S.E."/>
            <person name="Batalov S."/>
            <person name="Forrest A.R."/>
            <person name="Zavolan M."/>
            <person name="Davis M.J."/>
            <person name="Wilming L.G."/>
            <person name="Aidinis V."/>
            <person name="Allen J.E."/>
            <person name="Ambesi-Impiombato A."/>
            <person name="Apweiler R."/>
            <person name="Aturaliya R.N."/>
            <person name="Bailey T.L."/>
            <person name="Bansal M."/>
            <person name="Baxter L."/>
            <person name="Beisel K.W."/>
            <person name="Bersano T."/>
            <person name="Bono H."/>
            <person name="Chalk A.M."/>
            <person name="Chiu K.P."/>
            <person name="Choudhary V."/>
            <person name="Christoffels A."/>
            <person name="Clutterbuck D.R."/>
            <person name="Crowe M.L."/>
            <person name="Dalla E."/>
            <person name="Dalrymple B.P."/>
            <person name="de Bono B."/>
            <person name="Della Gatta G."/>
            <person name="di Bernardo D."/>
            <person name="Down T."/>
            <person name="Engstrom P."/>
            <person name="Fagiolini M."/>
            <person name="Faulkner G."/>
            <person name="Fletcher C.F."/>
            <person name="Fukushima T."/>
            <person name="Furuno M."/>
            <person name="Futaki S."/>
            <person name="Gariboldi M."/>
            <person name="Georgii-Hemming P."/>
            <person name="Gingeras T.R."/>
            <person name="Gojobori T."/>
            <person name="Green R.E."/>
            <person name="Gustincich S."/>
            <person name="Harbers M."/>
            <person name="Hayashi Y."/>
            <person name="Hensch T.K."/>
            <person name="Hirokawa N."/>
            <person name="Hill D."/>
            <person name="Huminiecki L."/>
            <person name="Iacono M."/>
            <person name="Ikeo K."/>
            <person name="Iwama A."/>
            <person name="Ishikawa T."/>
            <person name="Jakt M."/>
            <person name="Kanapin A."/>
            <person name="Katoh M."/>
            <person name="Kawasawa Y."/>
            <person name="Kelso J."/>
            <person name="Kitamura H."/>
            <person name="Kitano H."/>
            <person name="Kollias G."/>
            <person name="Krishnan S.P."/>
            <person name="Kruger A."/>
            <person name="Kummerfeld S.K."/>
            <person name="Kurochkin I.V."/>
            <person name="Lareau L.F."/>
            <person name="Lazarevic D."/>
            <person name="Lipovich L."/>
            <person name="Liu J."/>
            <person name="Liuni S."/>
            <person name="McWilliam S."/>
            <person name="Madan Babu M."/>
            <person name="Madera M."/>
            <person name="Marchionni L."/>
            <person name="Matsuda H."/>
            <person name="Matsuzawa S."/>
            <person name="Miki H."/>
            <person name="Mignone F."/>
            <person name="Miyake S."/>
            <person name="Morris K."/>
            <person name="Mottagui-Tabar S."/>
            <person name="Mulder N."/>
            <person name="Nakano N."/>
            <person name="Nakauchi H."/>
            <person name="Ng P."/>
            <person name="Nilsson R."/>
            <person name="Nishiguchi S."/>
            <person name="Nishikawa S."/>
            <person name="Nori F."/>
            <person name="Ohara O."/>
            <person name="Okazaki Y."/>
            <person name="Orlando V."/>
            <person name="Pang K.C."/>
            <person name="Pavan W.J."/>
            <person name="Pavesi G."/>
            <person name="Pesole G."/>
            <person name="Petrovsky N."/>
            <person name="Piazza S."/>
            <person name="Reed J."/>
            <person name="Reid J.F."/>
            <person name="Ring B.Z."/>
            <person name="Ringwald M."/>
            <person name="Rost B."/>
            <person name="Ruan Y."/>
            <person name="Salzberg S.L."/>
            <person name="Sandelin A."/>
            <person name="Schneider C."/>
            <person name="Schoenbach C."/>
            <person name="Sekiguchi K."/>
            <person name="Semple C.A."/>
            <person name="Seno S."/>
            <person name="Sessa L."/>
            <person name="Sheng Y."/>
            <person name="Shibata Y."/>
            <person name="Shimada H."/>
            <person name="Shimada K."/>
            <person name="Silva D."/>
            <person name="Sinclair B."/>
            <person name="Sperling S."/>
            <person name="Stupka E."/>
            <person name="Sugiura K."/>
            <person name="Sultana R."/>
            <person name="Takenaka Y."/>
            <person name="Taki K."/>
            <person name="Tammoja K."/>
            <person name="Tan S.L."/>
            <person name="Tang S."/>
            <person name="Taylor M.S."/>
            <person name="Tegner J."/>
            <person name="Teichmann S.A."/>
            <person name="Ueda H.R."/>
            <person name="van Nimwegen E."/>
            <person name="Verardo R."/>
            <person name="Wei C.L."/>
            <person name="Yagi K."/>
            <person name="Yamanishi H."/>
            <person name="Zabarovsky E."/>
            <person name="Zhu S."/>
            <person name="Zimmer A."/>
            <person name="Hide W."/>
            <person name="Bult C."/>
            <person name="Grimmond S.M."/>
            <person name="Teasdale R.D."/>
            <person name="Liu E.T."/>
            <person name="Brusic V."/>
            <person name="Quackenbush J."/>
            <person name="Wahlestedt C."/>
            <person name="Mattick J.S."/>
            <person name="Hume D.A."/>
            <person name="Kai C."/>
            <person name="Sasaki D."/>
            <person name="Tomaru Y."/>
            <person name="Fukuda S."/>
            <person name="Kanamori-Katayama M."/>
            <person name="Suzuki M."/>
            <person name="Aoki J."/>
            <person name="Arakawa T."/>
            <person name="Iida J."/>
            <person name="Imamura K."/>
            <person name="Itoh M."/>
            <person name="Kato T."/>
            <person name="Kawaji H."/>
            <person name="Kawagashira N."/>
            <person name="Kawashima T."/>
            <person name="Kojima M."/>
            <person name="Kondo S."/>
            <person name="Konno H."/>
            <person name="Nakano K."/>
            <person name="Ninomiya N."/>
            <person name="Nishio T."/>
            <person name="Okada M."/>
            <person name="Plessy C."/>
            <person name="Shibata K."/>
            <person name="Shiraki T."/>
            <person name="Suzuki S."/>
            <person name="Tagami M."/>
            <person name="Waki K."/>
            <person name="Watahiki A."/>
            <person name="Okamura-Oho Y."/>
            <person name="Suzuki H."/>
            <person name="Kawai J."/>
            <person name="Hayashizaki Y."/>
        </authorList>
    </citation>
    <scope>NUCLEOTIDE SEQUENCE [LARGE SCALE MRNA]</scope>
    <source>
        <strain>C57BL/6J</strain>
        <tissue>Heart</tissue>
    </source>
</reference>
<reference key="2">
    <citation type="journal article" date="2004" name="Genome Res.">
        <title>The status, quality, and expansion of the NIH full-length cDNA project: the Mammalian Gene Collection (MGC).</title>
        <authorList>
            <consortium name="The MGC Project Team"/>
        </authorList>
    </citation>
    <scope>NUCLEOTIDE SEQUENCE [LARGE SCALE MRNA]</scope>
    <source>
        <strain>FVB/N</strain>
        <strain>NMRI</strain>
        <tissue>Mammary gland</tissue>
    </source>
</reference>
<reference key="3">
    <citation type="journal article" date="2010" name="Cell">
        <title>A tissue-specific atlas of mouse protein phosphorylation and expression.</title>
        <authorList>
            <person name="Huttlin E.L."/>
            <person name="Jedrychowski M.P."/>
            <person name="Elias J.E."/>
            <person name="Goswami T."/>
            <person name="Rad R."/>
            <person name="Beausoleil S.A."/>
            <person name="Villen J."/>
            <person name="Haas W."/>
            <person name="Sowa M.E."/>
            <person name="Gygi S.P."/>
        </authorList>
    </citation>
    <scope>PHOSPHORYLATION [LARGE SCALE ANALYSIS] AT SER-56</scope>
    <scope>IDENTIFICATION BY MASS SPECTROMETRY [LARGE SCALE ANALYSIS]</scope>
    <source>
        <tissue>Lung</tissue>
        <tissue>Spleen</tissue>
    </source>
</reference>
<reference key="4">
    <citation type="journal article" date="2018" name="J. Biol. Chem.">
        <title>Glioma tumor suppressor candidate region gene 1 (GLTSCR1) and its paralog GLTSCR1-like form SWI/SNF chromatin remodeling subcomplexes.</title>
        <authorList>
            <person name="Alpsoy A."/>
            <person name="Dykhuizen E.C."/>
        </authorList>
    </citation>
    <scope>IDENTIFICATION IN THE GBAF COMPLEX</scope>
    <scope>INTERACTION WITH BRD4</scope>
</reference>
<proteinExistence type="evidence at protein level"/>
<protein>
    <recommendedName>
        <fullName>Bromodomain-containing protein 9</fullName>
    </recommendedName>
</protein>
<name>BRD9_MOUSE</name>